<proteinExistence type="inferred from homology"/>
<name>PYRE_CHLPB</name>
<organism>
    <name type="scientific">Chlorobium phaeobacteroides (strain BS1)</name>
    <dbReference type="NCBI Taxonomy" id="331678"/>
    <lineage>
        <taxon>Bacteria</taxon>
        <taxon>Pseudomonadati</taxon>
        <taxon>Chlorobiota</taxon>
        <taxon>Chlorobiia</taxon>
        <taxon>Chlorobiales</taxon>
        <taxon>Chlorobiaceae</taxon>
        <taxon>Chlorobium/Pelodictyon group</taxon>
        <taxon>Chlorobium</taxon>
    </lineage>
</organism>
<gene>
    <name evidence="1" type="primary">pyrE</name>
    <name type="ordered locus">Cphamn1_2430</name>
</gene>
<dbReference type="EC" id="2.4.2.10" evidence="1"/>
<dbReference type="EMBL" id="CP001101">
    <property type="protein sequence ID" value="ACE05325.1"/>
    <property type="molecule type" value="Genomic_DNA"/>
</dbReference>
<dbReference type="SMR" id="B3EPT5"/>
<dbReference type="STRING" id="331678.Cphamn1_2430"/>
<dbReference type="KEGG" id="cpb:Cphamn1_2430"/>
<dbReference type="eggNOG" id="COG0461">
    <property type="taxonomic scope" value="Bacteria"/>
</dbReference>
<dbReference type="HOGENOM" id="CLU_074878_3_0_10"/>
<dbReference type="OrthoDB" id="9783570at2"/>
<dbReference type="UniPathway" id="UPA00070">
    <property type="reaction ID" value="UER00119"/>
</dbReference>
<dbReference type="GO" id="GO:0000287">
    <property type="term" value="F:magnesium ion binding"/>
    <property type="evidence" value="ECO:0007669"/>
    <property type="project" value="UniProtKB-UniRule"/>
</dbReference>
<dbReference type="GO" id="GO:0004588">
    <property type="term" value="F:orotate phosphoribosyltransferase activity"/>
    <property type="evidence" value="ECO:0007669"/>
    <property type="project" value="UniProtKB-UniRule"/>
</dbReference>
<dbReference type="GO" id="GO:0044205">
    <property type="term" value="P:'de novo' UMP biosynthetic process"/>
    <property type="evidence" value="ECO:0007669"/>
    <property type="project" value="UniProtKB-UniRule"/>
</dbReference>
<dbReference type="GO" id="GO:0019856">
    <property type="term" value="P:pyrimidine nucleobase biosynthetic process"/>
    <property type="evidence" value="ECO:0007669"/>
    <property type="project" value="InterPro"/>
</dbReference>
<dbReference type="CDD" id="cd06223">
    <property type="entry name" value="PRTases_typeI"/>
    <property type="match status" value="1"/>
</dbReference>
<dbReference type="Gene3D" id="3.40.50.2020">
    <property type="match status" value="1"/>
</dbReference>
<dbReference type="HAMAP" id="MF_01208">
    <property type="entry name" value="PyrE"/>
    <property type="match status" value="1"/>
</dbReference>
<dbReference type="InterPro" id="IPR023031">
    <property type="entry name" value="OPRT"/>
</dbReference>
<dbReference type="InterPro" id="IPR006273">
    <property type="entry name" value="Orotate_PRibTrfase_bac"/>
</dbReference>
<dbReference type="InterPro" id="IPR000836">
    <property type="entry name" value="PRibTrfase_dom"/>
</dbReference>
<dbReference type="InterPro" id="IPR029057">
    <property type="entry name" value="PRTase-like"/>
</dbReference>
<dbReference type="NCBIfam" id="TIGR01367">
    <property type="entry name" value="pyrE_Therm"/>
    <property type="match status" value="1"/>
</dbReference>
<dbReference type="PANTHER" id="PTHR19278">
    <property type="entry name" value="OROTATE PHOSPHORIBOSYLTRANSFERASE"/>
    <property type="match status" value="1"/>
</dbReference>
<dbReference type="PANTHER" id="PTHR19278:SF9">
    <property type="entry name" value="URIDINE 5'-MONOPHOSPHATE SYNTHASE"/>
    <property type="match status" value="1"/>
</dbReference>
<dbReference type="Pfam" id="PF00156">
    <property type="entry name" value="Pribosyltran"/>
    <property type="match status" value="1"/>
</dbReference>
<dbReference type="SUPFAM" id="SSF53271">
    <property type="entry name" value="PRTase-like"/>
    <property type="match status" value="1"/>
</dbReference>
<dbReference type="PROSITE" id="PS00103">
    <property type="entry name" value="PUR_PYR_PR_TRANSFER"/>
    <property type="match status" value="1"/>
</dbReference>
<evidence type="ECO:0000255" key="1">
    <source>
        <dbReference type="HAMAP-Rule" id="MF_01208"/>
    </source>
</evidence>
<accession>B3EPT5</accession>
<sequence>MSTPAIIDIFRSSGALLEGHFKLTSGLHSNTYFQCAKVLQHPEYLTEICRNIASAFSDVTIDMVISPAVGGIVVGTETGRQLGVKTIFSERKNGEMVLRRGFTLSPEEKVLIVEDVITTGGSVAEVIDIVTKAGAIVAGVGSVVDRSNGKVTLAEKQFSLLCLEVKNYDPDTCPLCAENLPLDAPGSRSLTTS</sequence>
<keyword id="KW-0328">Glycosyltransferase</keyword>
<keyword id="KW-0460">Magnesium</keyword>
<keyword id="KW-0665">Pyrimidine biosynthesis</keyword>
<keyword id="KW-0808">Transferase</keyword>
<feature type="chain" id="PRO_1000138772" description="Orotate phosphoribosyltransferase">
    <location>
        <begin position="1"/>
        <end position="193"/>
    </location>
</feature>
<feature type="binding site" evidence="1">
    <location>
        <begin position="114"/>
        <end position="122"/>
    </location>
    <ligand>
        <name>5-phospho-alpha-D-ribose 1-diphosphate</name>
        <dbReference type="ChEBI" id="CHEBI:58017"/>
    </ligand>
</feature>
<feature type="binding site" evidence="1">
    <location>
        <position position="118"/>
    </location>
    <ligand>
        <name>orotate</name>
        <dbReference type="ChEBI" id="CHEBI:30839"/>
    </ligand>
</feature>
<feature type="binding site" evidence="1">
    <location>
        <position position="146"/>
    </location>
    <ligand>
        <name>orotate</name>
        <dbReference type="ChEBI" id="CHEBI:30839"/>
    </ligand>
</feature>
<protein>
    <recommendedName>
        <fullName evidence="1">Orotate phosphoribosyltransferase</fullName>
        <shortName evidence="1">OPRT</shortName>
        <shortName evidence="1">OPRTase</shortName>
        <ecNumber evidence="1">2.4.2.10</ecNumber>
    </recommendedName>
</protein>
<reference key="1">
    <citation type="submission" date="2008-06" db="EMBL/GenBank/DDBJ databases">
        <title>Complete sequence of Chlorobium phaeobacteroides BS1.</title>
        <authorList>
            <consortium name="US DOE Joint Genome Institute"/>
            <person name="Lucas S."/>
            <person name="Copeland A."/>
            <person name="Lapidus A."/>
            <person name="Glavina del Rio T."/>
            <person name="Dalin E."/>
            <person name="Tice H."/>
            <person name="Bruce D."/>
            <person name="Goodwin L."/>
            <person name="Pitluck S."/>
            <person name="Schmutz J."/>
            <person name="Larimer F."/>
            <person name="Land M."/>
            <person name="Hauser L."/>
            <person name="Kyrpides N."/>
            <person name="Ovchinnikova G."/>
            <person name="Li T."/>
            <person name="Liu Z."/>
            <person name="Zhao F."/>
            <person name="Overmann J."/>
            <person name="Bryant D.A."/>
            <person name="Richardson P."/>
        </authorList>
    </citation>
    <scope>NUCLEOTIDE SEQUENCE [LARGE SCALE GENOMIC DNA]</scope>
    <source>
        <strain>BS1</strain>
    </source>
</reference>
<comment type="function">
    <text evidence="1">Catalyzes the transfer of a ribosyl phosphate group from 5-phosphoribose 1-diphosphate to orotate, leading to the formation of orotidine monophosphate (OMP).</text>
</comment>
<comment type="catalytic activity">
    <reaction evidence="1">
        <text>orotidine 5'-phosphate + diphosphate = orotate + 5-phospho-alpha-D-ribose 1-diphosphate</text>
        <dbReference type="Rhea" id="RHEA:10380"/>
        <dbReference type="ChEBI" id="CHEBI:30839"/>
        <dbReference type="ChEBI" id="CHEBI:33019"/>
        <dbReference type="ChEBI" id="CHEBI:57538"/>
        <dbReference type="ChEBI" id="CHEBI:58017"/>
        <dbReference type="EC" id="2.4.2.10"/>
    </reaction>
</comment>
<comment type="cofactor">
    <cofactor evidence="1">
        <name>Mg(2+)</name>
        <dbReference type="ChEBI" id="CHEBI:18420"/>
    </cofactor>
</comment>
<comment type="pathway">
    <text evidence="1">Pyrimidine metabolism; UMP biosynthesis via de novo pathway; UMP from orotate: step 1/2.</text>
</comment>
<comment type="subunit">
    <text evidence="1">Homodimer.</text>
</comment>
<comment type="similarity">
    <text evidence="1">Belongs to the purine/pyrimidine phosphoribosyltransferase family. PyrE subfamily.</text>
</comment>